<comment type="function">
    <text evidence="1">The RuvA-RuvB-RuvC complex processes Holliday junction (HJ) DNA during genetic recombination and DNA repair. Endonuclease that resolves HJ intermediates. Cleaves cruciform DNA by making single-stranded nicks across the HJ at symmetrical positions within the homologous arms, yielding a 5'-phosphate and a 3'-hydroxyl group; requires a central core of homology in the junction. The consensus cleavage sequence is 5'-(A/T)TT(C/G)-3'. Cleavage occurs on the 3'-side of the TT dinucleotide at the point of strand exchange. HJ branch migration catalyzed by RuvA-RuvB allows RuvC to scan DNA until it finds its consensus sequence, where it cleaves and resolves the cruciform DNA.</text>
</comment>
<comment type="catalytic activity">
    <reaction evidence="1">
        <text>Endonucleolytic cleavage at a junction such as a reciprocal single-stranded crossover between two homologous DNA duplexes (Holliday junction).</text>
        <dbReference type="EC" id="3.1.21.10"/>
    </reaction>
</comment>
<comment type="cofactor">
    <cofactor evidence="1">
        <name>Mg(2+)</name>
        <dbReference type="ChEBI" id="CHEBI:18420"/>
    </cofactor>
    <text evidence="1">Binds 2 Mg(2+) ion per subunit.</text>
</comment>
<comment type="subunit">
    <text evidence="1">Homodimer which binds Holliday junction (HJ) DNA. The HJ becomes 2-fold symmetrical on binding to RuvC with unstacked arms; it has a different conformation from HJ DNA in complex with RuvA. In the full resolvosome a probable DNA-RuvA(4)-RuvB(12)-RuvC(2) complex forms which resolves the HJ.</text>
</comment>
<comment type="subcellular location">
    <subcellularLocation>
        <location evidence="1">Cytoplasm</location>
    </subcellularLocation>
</comment>
<comment type="similarity">
    <text evidence="1">Belongs to the RuvC family.</text>
</comment>
<proteinExistence type="inferred from homology"/>
<feature type="chain" id="PRO_1000202045" description="Crossover junction endodeoxyribonuclease RuvC">
    <location>
        <begin position="1"/>
        <end position="182"/>
    </location>
</feature>
<feature type="active site" evidence="1">
    <location>
        <position position="7"/>
    </location>
</feature>
<feature type="active site" evidence="1">
    <location>
        <position position="69"/>
    </location>
</feature>
<feature type="active site" evidence="1">
    <location>
        <position position="141"/>
    </location>
</feature>
<feature type="binding site" evidence="1">
    <location>
        <position position="7"/>
    </location>
    <ligand>
        <name>Mg(2+)</name>
        <dbReference type="ChEBI" id="CHEBI:18420"/>
        <label>1</label>
    </ligand>
</feature>
<feature type="binding site" evidence="1">
    <location>
        <position position="69"/>
    </location>
    <ligand>
        <name>Mg(2+)</name>
        <dbReference type="ChEBI" id="CHEBI:18420"/>
        <label>2</label>
    </ligand>
</feature>
<feature type="binding site" evidence="1">
    <location>
        <position position="141"/>
    </location>
    <ligand>
        <name>Mg(2+)</name>
        <dbReference type="ChEBI" id="CHEBI:18420"/>
        <label>1</label>
    </ligand>
</feature>
<accession>C5CNG5</accession>
<evidence type="ECO:0000255" key="1">
    <source>
        <dbReference type="HAMAP-Rule" id="MF_00034"/>
    </source>
</evidence>
<protein>
    <recommendedName>
        <fullName evidence="1">Crossover junction endodeoxyribonuclease RuvC</fullName>
        <ecNumber evidence="1">3.1.21.10</ecNumber>
    </recommendedName>
    <alternativeName>
        <fullName evidence="1">Holliday junction nuclease RuvC</fullName>
    </alternativeName>
    <alternativeName>
        <fullName evidence="1">Holliday junction resolvase RuvC</fullName>
    </alternativeName>
</protein>
<keyword id="KW-0963">Cytoplasm</keyword>
<keyword id="KW-0227">DNA damage</keyword>
<keyword id="KW-0233">DNA recombination</keyword>
<keyword id="KW-0234">DNA repair</keyword>
<keyword id="KW-0238">DNA-binding</keyword>
<keyword id="KW-0255">Endonuclease</keyword>
<keyword id="KW-0378">Hydrolase</keyword>
<keyword id="KW-0460">Magnesium</keyword>
<keyword id="KW-0479">Metal-binding</keyword>
<keyword id="KW-0540">Nuclease</keyword>
<sequence>MRILGIDPGLLTTGFGVVDSDGHALSYVASGTISTRHLGSGNLPARLKVLFDGIAEIAARYQPDASAVEIIFVNVNPQSTLLLGQARGACVTSLVNSNLSVAEYTALQMKKAVAGHGQAAKAQVQEMVKRLLDLPGLPGADAADALGIAITHAQVGRSMARLAEAAELSKTHAGTYRQGRSR</sequence>
<dbReference type="EC" id="3.1.21.10" evidence="1"/>
<dbReference type="EMBL" id="CP001635">
    <property type="protein sequence ID" value="ACS17581.1"/>
    <property type="molecule type" value="Genomic_DNA"/>
</dbReference>
<dbReference type="SMR" id="C5CNG5"/>
<dbReference type="STRING" id="543728.Vapar_0930"/>
<dbReference type="KEGG" id="vap:Vapar_0930"/>
<dbReference type="eggNOG" id="COG0817">
    <property type="taxonomic scope" value="Bacteria"/>
</dbReference>
<dbReference type="HOGENOM" id="CLU_091257_1_0_4"/>
<dbReference type="OrthoDB" id="9805499at2"/>
<dbReference type="GO" id="GO:0005737">
    <property type="term" value="C:cytoplasm"/>
    <property type="evidence" value="ECO:0007669"/>
    <property type="project" value="UniProtKB-SubCell"/>
</dbReference>
<dbReference type="GO" id="GO:0048476">
    <property type="term" value="C:Holliday junction resolvase complex"/>
    <property type="evidence" value="ECO:0007669"/>
    <property type="project" value="UniProtKB-UniRule"/>
</dbReference>
<dbReference type="GO" id="GO:0008821">
    <property type="term" value="F:crossover junction DNA endonuclease activity"/>
    <property type="evidence" value="ECO:0007669"/>
    <property type="project" value="UniProtKB-UniRule"/>
</dbReference>
<dbReference type="GO" id="GO:0003677">
    <property type="term" value="F:DNA binding"/>
    <property type="evidence" value="ECO:0007669"/>
    <property type="project" value="UniProtKB-KW"/>
</dbReference>
<dbReference type="GO" id="GO:0000287">
    <property type="term" value="F:magnesium ion binding"/>
    <property type="evidence" value="ECO:0007669"/>
    <property type="project" value="UniProtKB-UniRule"/>
</dbReference>
<dbReference type="GO" id="GO:0006310">
    <property type="term" value="P:DNA recombination"/>
    <property type="evidence" value="ECO:0007669"/>
    <property type="project" value="UniProtKB-UniRule"/>
</dbReference>
<dbReference type="GO" id="GO:0006281">
    <property type="term" value="P:DNA repair"/>
    <property type="evidence" value="ECO:0007669"/>
    <property type="project" value="UniProtKB-UniRule"/>
</dbReference>
<dbReference type="CDD" id="cd16962">
    <property type="entry name" value="RuvC"/>
    <property type="match status" value="1"/>
</dbReference>
<dbReference type="FunFam" id="3.30.420.10:FF:000002">
    <property type="entry name" value="Crossover junction endodeoxyribonuclease RuvC"/>
    <property type="match status" value="1"/>
</dbReference>
<dbReference type="Gene3D" id="3.30.420.10">
    <property type="entry name" value="Ribonuclease H-like superfamily/Ribonuclease H"/>
    <property type="match status" value="1"/>
</dbReference>
<dbReference type="HAMAP" id="MF_00034">
    <property type="entry name" value="RuvC"/>
    <property type="match status" value="1"/>
</dbReference>
<dbReference type="InterPro" id="IPR012337">
    <property type="entry name" value="RNaseH-like_sf"/>
</dbReference>
<dbReference type="InterPro" id="IPR036397">
    <property type="entry name" value="RNaseH_sf"/>
</dbReference>
<dbReference type="InterPro" id="IPR020563">
    <property type="entry name" value="X-over_junc_endoDNase_Mg_BS"/>
</dbReference>
<dbReference type="InterPro" id="IPR002176">
    <property type="entry name" value="X-over_junc_endoDNase_RuvC"/>
</dbReference>
<dbReference type="NCBIfam" id="TIGR00228">
    <property type="entry name" value="ruvC"/>
    <property type="match status" value="1"/>
</dbReference>
<dbReference type="PANTHER" id="PTHR30194">
    <property type="entry name" value="CROSSOVER JUNCTION ENDODEOXYRIBONUCLEASE RUVC"/>
    <property type="match status" value="1"/>
</dbReference>
<dbReference type="PANTHER" id="PTHR30194:SF3">
    <property type="entry name" value="CROSSOVER JUNCTION ENDODEOXYRIBONUCLEASE RUVC"/>
    <property type="match status" value="1"/>
</dbReference>
<dbReference type="Pfam" id="PF02075">
    <property type="entry name" value="RuvC"/>
    <property type="match status" value="1"/>
</dbReference>
<dbReference type="PRINTS" id="PR00696">
    <property type="entry name" value="RSOLVASERUVC"/>
</dbReference>
<dbReference type="SUPFAM" id="SSF53098">
    <property type="entry name" value="Ribonuclease H-like"/>
    <property type="match status" value="1"/>
</dbReference>
<dbReference type="PROSITE" id="PS01321">
    <property type="entry name" value="RUVC"/>
    <property type="match status" value="1"/>
</dbReference>
<organism>
    <name type="scientific">Variovorax paradoxus (strain S110)</name>
    <dbReference type="NCBI Taxonomy" id="543728"/>
    <lineage>
        <taxon>Bacteria</taxon>
        <taxon>Pseudomonadati</taxon>
        <taxon>Pseudomonadota</taxon>
        <taxon>Betaproteobacteria</taxon>
        <taxon>Burkholderiales</taxon>
        <taxon>Comamonadaceae</taxon>
        <taxon>Variovorax</taxon>
    </lineage>
</organism>
<reference key="1">
    <citation type="journal article" date="2011" name="J. Bacteriol.">
        <title>Complete genome sequence of the metabolically versatile plant growth-promoting endophyte, Variovorax paradoxus S110.</title>
        <authorList>
            <person name="Han J.I."/>
            <person name="Choi H.K."/>
            <person name="Lee S.W."/>
            <person name="Orwin P.M."/>
            <person name="Kim J."/>
            <person name="Laroe S.L."/>
            <person name="Kim T.G."/>
            <person name="O'Neil J."/>
            <person name="Leadbetter J.R."/>
            <person name="Lee S.Y."/>
            <person name="Hur C.G."/>
            <person name="Spain J.C."/>
            <person name="Ovchinnikova G."/>
            <person name="Goodwin L."/>
            <person name="Han C."/>
        </authorList>
    </citation>
    <scope>NUCLEOTIDE SEQUENCE [LARGE SCALE GENOMIC DNA]</scope>
    <source>
        <strain>S110</strain>
    </source>
</reference>
<name>RUVC_VARPS</name>
<gene>
    <name evidence="1" type="primary">ruvC</name>
    <name type="ordered locus">Vapar_0930</name>
</gene>